<dbReference type="EMBL" id="AF281676">
    <property type="protein sequence ID" value="AAG15192.1"/>
    <property type="molecule type" value="mRNA"/>
</dbReference>
<dbReference type="EMBL" id="BC025123">
    <property type="protein sequence ID" value="AAH25123.1"/>
    <property type="molecule type" value="mRNA"/>
</dbReference>
<dbReference type="CCDS" id="CCDS37237.1"/>
<dbReference type="RefSeq" id="NP_067366.1">
    <property type="nucleotide sequence ID" value="NM_021391.3"/>
</dbReference>
<dbReference type="BioGRID" id="208385">
    <property type="interactions" value="1"/>
</dbReference>
<dbReference type="FunCoup" id="Q9ERT9">
    <property type="interactions" value="218"/>
</dbReference>
<dbReference type="STRING" id="10090.ENSMUSP00000023133"/>
<dbReference type="GlyGen" id="Q9ERT9">
    <property type="glycosylation" value="1 site, 1 O-linked glycan (1 site)"/>
</dbReference>
<dbReference type="iPTMnet" id="Q9ERT9"/>
<dbReference type="PhosphoSitePlus" id="Q9ERT9"/>
<dbReference type="SwissPalm" id="Q9ERT9"/>
<dbReference type="jPOST" id="Q9ERT9"/>
<dbReference type="PaxDb" id="10090-ENSMUSP00000023133"/>
<dbReference type="PeptideAtlas" id="Q9ERT9"/>
<dbReference type="ProteomicsDB" id="291721"/>
<dbReference type="Antibodypedia" id="27544">
    <property type="antibodies" value="88 antibodies from 29 providers"/>
</dbReference>
<dbReference type="DNASU" id="58200"/>
<dbReference type="Ensembl" id="ENSMUST00000023133.8">
    <property type="protein sequence ID" value="ENSMUSP00000023133.7"/>
    <property type="gene ID" value="ENSMUSG00000022490.8"/>
</dbReference>
<dbReference type="GeneID" id="58200"/>
<dbReference type="KEGG" id="mmu:58200"/>
<dbReference type="UCSC" id="uc007xyj.1">
    <property type="organism name" value="mouse"/>
</dbReference>
<dbReference type="AGR" id="MGI:1889595"/>
<dbReference type="CTD" id="5502"/>
<dbReference type="MGI" id="MGI:1889595">
    <property type="gene designation" value="Ppp1r1a"/>
</dbReference>
<dbReference type="VEuPathDB" id="HostDB:ENSMUSG00000022490"/>
<dbReference type="eggNOG" id="ENOG502S1WG">
    <property type="taxonomic scope" value="Eukaryota"/>
</dbReference>
<dbReference type="GeneTree" id="ENSGT00940000161232"/>
<dbReference type="HOGENOM" id="CLU_092269_1_0_1"/>
<dbReference type="InParanoid" id="Q9ERT9"/>
<dbReference type="OMA" id="PKTQERC"/>
<dbReference type="OrthoDB" id="9940275at2759"/>
<dbReference type="PhylomeDB" id="Q9ERT9"/>
<dbReference type="TreeFam" id="TF332576"/>
<dbReference type="BioGRID-ORCS" id="58200">
    <property type="hits" value="1 hit in 77 CRISPR screens"/>
</dbReference>
<dbReference type="ChiTaRS" id="Ppp1r1a">
    <property type="organism name" value="mouse"/>
</dbReference>
<dbReference type="PRO" id="PR:Q9ERT9"/>
<dbReference type="Proteomes" id="UP000000589">
    <property type="component" value="Chromosome 15"/>
</dbReference>
<dbReference type="RNAct" id="Q9ERT9">
    <property type="molecule type" value="protein"/>
</dbReference>
<dbReference type="Bgee" id="ENSMUSG00000022490">
    <property type="expression patterns" value="Expressed in right kidney and 215 other cell types or tissues"/>
</dbReference>
<dbReference type="GO" id="GO:0004864">
    <property type="term" value="F:protein phosphatase inhibitor activity"/>
    <property type="evidence" value="ECO:0007669"/>
    <property type="project" value="UniProtKB-KW"/>
</dbReference>
<dbReference type="GO" id="GO:0005977">
    <property type="term" value="P:glycogen metabolic process"/>
    <property type="evidence" value="ECO:0007669"/>
    <property type="project" value="UniProtKB-KW"/>
</dbReference>
<dbReference type="GO" id="GO:0007165">
    <property type="term" value="P:signal transduction"/>
    <property type="evidence" value="ECO:0007669"/>
    <property type="project" value="InterPro"/>
</dbReference>
<dbReference type="InterPro" id="IPR008466">
    <property type="entry name" value="PPP1R1A/B/C"/>
</dbReference>
<dbReference type="PANTHER" id="PTHR15417:SF4">
    <property type="entry name" value="PROTEIN PHOSPHATASE 1 REGULATORY SUBUNIT 1A"/>
    <property type="match status" value="1"/>
</dbReference>
<dbReference type="PANTHER" id="PTHR15417">
    <property type="entry name" value="PROTEIN PHOSPHATASE INHIBITOR AND DOPAMINE- AND CAMP-REGULATED NEURONAL PHOSPHOPROTEIN"/>
    <property type="match status" value="1"/>
</dbReference>
<dbReference type="Pfam" id="PF05395">
    <property type="entry name" value="DARPP-32"/>
    <property type="match status" value="1"/>
</dbReference>
<feature type="chain" id="PRO_0000071478" description="Protein phosphatase 1 regulatory subunit 1A">
    <location>
        <begin position="1"/>
        <end position="171"/>
    </location>
</feature>
<feature type="region of interest" description="Disordered" evidence="4">
    <location>
        <begin position="1"/>
        <end position="171"/>
    </location>
</feature>
<feature type="region of interest" description="Essential for activity">
    <location>
        <begin position="9"/>
        <end position="12"/>
    </location>
</feature>
<feature type="region of interest" description="Essential for activity" evidence="5">
    <location>
        <begin position="42"/>
        <end position="54"/>
    </location>
</feature>
<feature type="region of interest" description="Interaction with PPP1R15A" evidence="1">
    <location>
        <begin position="143"/>
        <end position="171"/>
    </location>
</feature>
<feature type="compositionally biased region" description="Basic and acidic residues" evidence="4">
    <location>
        <begin position="19"/>
        <end position="29"/>
    </location>
</feature>
<feature type="compositionally biased region" description="Polar residues" evidence="4">
    <location>
        <begin position="122"/>
        <end position="146"/>
    </location>
</feature>
<feature type="modified residue" description="N-acetylmethionine" evidence="2">
    <location>
        <position position="1"/>
    </location>
</feature>
<feature type="modified residue" description="Phosphothreonine" evidence="6">
    <location>
        <position position="35"/>
    </location>
</feature>
<feature type="modified residue" description="Phosphoserine" evidence="6">
    <location>
        <position position="43"/>
    </location>
</feature>
<feature type="modified residue" description="Phosphoserine" evidence="6">
    <location>
        <position position="46"/>
    </location>
</feature>
<feature type="modified residue" description="Phosphoserine" evidence="6">
    <location>
        <position position="47"/>
    </location>
</feature>
<feature type="modified residue" description="Phosphoserine" evidence="3">
    <location>
        <position position="67"/>
    </location>
</feature>
<organism>
    <name type="scientific">Mus musculus</name>
    <name type="common">Mouse</name>
    <dbReference type="NCBI Taxonomy" id="10090"/>
    <lineage>
        <taxon>Eukaryota</taxon>
        <taxon>Metazoa</taxon>
        <taxon>Chordata</taxon>
        <taxon>Craniata</taxon>
        <taxon>Vertebrata</taxon>
        <taxon>Euteleostomi</taxon>
        <taxon>Mammalia</taxon>
        <taxon>Eutheria</taxon>
        <taxon>Euarchontoglires</taxon>
        <taxon>Glires</taxon>
        <taxon>Rodentia</taxon>
        <taxon>Myomorpha</taxon>
        <taxon>Muroidea</taxon>
        <taxon>Muridae</taxon>
        <taxon>Murinae</taxon>
        <taxon>Mus</taxon>
        <taxon>Mus</taxon>
    </lineage>
</organism>
<reference key="1">
    <citation type="journal article" date="2000" name="Mech. Dev.">
        <title>Expression and genomic characterization of protein phosphatase inhibitor-1: a novel marker for mesothelium in the mouse.</title>
        <authorList>
            <person name="McLaren L."/>
            <person name="Boyle S."/>
            <person name="Mason J.O."/>
            <person name="Bard J.B.L."/>
        </authorList>
    </citation>
    <scope>NUCLEOTIDE SEQUENCE [MRNA]</scope>
    <source>
        <strain>BALB/cJ</strain>
    </source>
</reference>
<reference key="2">
    <citation type="journal article" date="2004" name="Genome Res.">
        <title>The status, quality, and expansion of the NIH full-length cDNA project: the Mammalian Gene Collection (MGC).</title>
        <authorList>
            <consortium name="The MGC Project Team"/>
        </authorList>
    </citation>
    <scope>NUCLEOTIDE SEQUENCE [LARGE SCALE MRNA]</scope>
</reference>
<reference key="3">
    <citation type="journal article" date="2010" name="Cell">
        <title>A tissue-specific atlas of mouse protein phosphorylation and expression.</title>
        <authorList>
            <person name="Huttlin E.L."/>
            <person name="Jedrychowski M.P."/>
            <person name="Elias J.E."/>
            <person name="Goswami T."/>
            <person name="Rad R."/>
            <person name="Beausoleil S.A."/>
            <person name="Villen J."/>
            <person name="Haas W."/>
            <person name="Sowa M.E."/>
            <person name="Gygi S.P."/>
        </authorList>
    </citation>
    <scope>PHOSPHORYLATION [LARGE SCALE ANALYSIS] AT THR-35; SER-43; SER-46 AND SER-47</scope>
    <scope>IDENTIFICATION BY MASS SPECTROMETRY [LARGE SCALE ANALYSIS]</scope>
    <source>
        <tissue>Brain</tissue>
        <tissue>Kidney</tissue>
        <tissue>Lung</tissue>
    </source>
</reference>
<accession>Q9ERT9</accession>
<keyword id="KW-0007">Acetylation</keyword>
<keyword id="KW-0119">Carbohydrate metabolism</keyword>
<keyword id="KW-0321">Glycogen metabolism</keyword>
<keyword id="KW-0597">Phosphoprotein</keyword>
<keyword id="KW-0650">Protein phosphatase inhibitor</keyword>
<keyword id="KW-1185">Reference proteome</keyword>
<proteinExistence type="evidence at protein level"/>
<name>PPR1A_MOUSE</name>
<sequence length="171" mass="18718">MEPDNSPRKIQFTVPLLEPHLDPEAAEQIRRRRPTPATLVLTSDQSSPEIDEDRIPNSLLKSTLSMSPRQRKKMTRTTPTMKELQTMVEHHLGQQKQGEEPEGATESTGNQESCPPGIPDTGSASRPDTPGTAQKSAESNPKTQEQCGVEPRTEDSSAHMLPLDSQGASLV</sequence>
<evidence type="ECO:0000250" key="1"/>
<evidence type="ECO:0000250" key="2">
    <source>
        <dbReference type="UniProtKB" id="P01099"/>
    </source>
</evidence>
<evidence type="ECO:0000250" key="3">
    <source>
        <dbReference type="UniProtKB" id="Q13522"/>
    </source>
</evidence>
<evidence type="ECO:0000256" key="4">
    <source>
        <dbReference type="SAM" id="MobiDB-lite"/>
    </source>
</evidence>
<evidence type="ECO:0000305" key="5"/>
<evidence type="ECO:0007744" key="6">
    <source>
    </source>
</evidence>
<comment type="function">
    <text>Inhibitor of protein-phosphatase 1. This protein may be important in hormonal control of glycogen metabolism. Hormones that elevate intracellular cAMP increase I-1 activity in many tissues. I-1 activation may impose cAMP control over proteins that are not directly phosphorylated by PKA. Following a rise in intracellular calcium, I-1 is inactivated by calcineurin (or PP2B). Does not inhibit type-2 phosphatases.</text>
</comment>
<comment type="subunit">
    <text evidence="1">Interacts with PPP1R15A.</text>
</comment>
<comment type="PTM">
    <text evidence="1">Phosphorylation of Thr-35 is required for activity.</text>
</comment>
<comment type="similarity">
    <text evidence="5">Belongs to the protein phosphatase inhibitor 1 family.</text>
</comment>
<gene>
    <name type="primary">Ppp1r1a</name>
</gene>
<protein>
    <recommendedName>
        <fullName>Protein phosphatase 1 regulatory subunit 1A</fullName>
    </recommendedName>
    <alternativeName>
        <fullName>Protein phosphatase inhibitor 1</fullName>
        <shortName>I-1</shortName>
        <shortName>IPP-1</shortName>
    </alternativeName>
</protein>